<evidence type="ECO:0000255" key="1">
    <source>
        <dbReference type="HAMAP-Rule" id="MF_01394"/>
    </source>
</evidence>
<dbReference type="EC" id="7.1.1.-" evidence="1"/>
<dbReference type="EMBL" id="CP000948">
    <property type="protein sequence ID" value="ACB03447.1"/>
    <property type="molecule type" value="Genomic_DNA"/>
</dbReference>
<dbReference type="RefSeq" id="WP_000062997.1">
    <property type="nucleotide sequence ID" value="NC_010473.1"/>
</dbReference>
<dbReference type="SMR" id="B1X900"/>
<dbReference type="GeneID" id="93774886"/>
<dbReference type="KEGG" id="ecd:ECDH10B_2450"/>
<dbReference type="HOGENOM" id="CLU_119549_2_0_6"/>
<dbReference type="GO" id="GO:0030964">
    <property type="term" value="C:NADH dehydrogenase complex"/>
    <property type="evidence" value="ECO:0007669"/>
    <property type="project" value="TreeGrafter"/>
</dbReference>
<dbReference type="GO" id="GO:0005886">
    <property type="term" value="C:plasma membrane"/>
    <property type="evidence" value="ECO:0007669"/>
    <property type="project" value="UniProtKB-SubCell"/>
</dbReference>
<dbReference type="GO" id="GO:0008137">
    <property type="term" value="F:NADH dehydrogenase (ubiquinone) activity"/>
    <property type="evidence" value="ECO:0007669"/>
    <property type="project" value="InterPro"/>
</dbReference>
<dbReference type="GO" id="GO:0050136">
    <property type="term" value="F:NADH:ubiquinone reductase (non-electrogenic) activity"/>
    <property type="evidence" value="ECO:0007669"/>
    <property type="project" value="UniProtKB-UniRule"/>
</dbReference>
<dbReference type="GO" id="GO:0048038">
    <property type="term" value="F:quinone binding"/>
    <property type="evidence" value="ECO:0007669"/>
    <property type="project" value="UniProtKB-KW"/>
</dbReference>
<dbReference type="FunFam" id="1.20.58.1610:FF:000003">
    <property type="entry name" value="NADH-quinone oxidoreductase subunit A"/>
    <property type="match status" value="1"/>
</dbReference>
<dbReference type="Gene3D" id="1.20.58.1610">
    <property type="entry name" value="NADH:ubiquinone/plastoquinone oxidoreductase, chain 3"/>
    <property type="match status" value="1"/>
</dbReference>
<dbReference type="HAMAP" id="MF_01394">
    <property type="entry name" value="NDH1_NuoA"/>
    <property type="match status" value="1"/>
</dbReference>
<dbReference type="InterPro" id="IPR023043">
    <property type="entry name" value="NAD(P)H_OxRDtase_bac/plastid"/>
</dbReference>
<dbReference type="InterPro" id="IPR000440">
    <property type="entry name" value="NADH_UbQ/plastoQ_OxRdtase_su3"/>
</dbReference>
<dbReference type="InterPro" id="IPR038430">
    <property type="entry name" value="NDAH_ubi_oxred_su3_sf"/>
</dbReference>
<dbReference type="PANTHER" id="PTHR11058:SF21">
    <property type="entry name" value="NADH-QUINONE OXIDOREDUCTASE SUBUNIT A"/>
    <property type="match status" value="1"/>
</dbReference>
<dbReference type="PANTHER" id="PTHR11058">
    <property type="entry name" value="NADH-UBIQUINONE OXIDOREDUCTASE CHAIN 3"/>
    <property type="match status" value="1"/>
</dbReference>
<dbReference type="Pfam" id="PF00507">
    <property type="entry name" value="Oxidored_q4"/>
    <property type="match status" value="1"/>
</dbReference>
<sequence>MSMSTSTEVIAHHWAFAIFLIVAIGLCCLMLVGGWFLGGRARARSKNVPFESGIDSVGSARLRLSAKFYLVAMFFVIFDVEALYLFAWSTSIRESGWVGFVEAAIFIFVLLAGLVYLVRIGALDWTPARSRRERMNPETNSIANRQR</sequence>
<name>NUOA_ECODH</name>
<accession>B1X900</accession>
<comment type="function">
    <text evidence="1">NDH-1 shuttles electrons from NADH, via FMN and iron-sulfur (Fe-S) centers, to quinones in the respiratory chain. The immediate electron acceptor for the enzyme in this species is believed to be ubiquinone. Couples the redox reaction to proton translocation (for every two electrons transferred, four hydrogen ions are translocated across the cytoplasmic membrane), and thus conserves the redox energy in a proton gradient.</text>
</comment>
<comment type="catalytic activity">
    <reaction evidence="1">
        <text>a quinone + NADH + 5 H(+)(in) = a quinol + NAD(+) + 4 H(+)(out)</text>
        <dbReference type="Rhea" id="RHEA:57888"/>
        <dbReference type="ChEBI" id="CHEBI:15378"/>
        <dbReference type="ChEBI" id="CHEBI:24646"/>
        <dbReference type="ChEBI" id="CHEBI:57540"/>
        <dbReference type="ChEBI" id="CHEBI:57945"/>
        <dbReference type="ChEBI" id="CHEBI:132124"/>
    </reaction>
</comment>
<comment type="subunit">
    <text evidence="1">NDH-1 is composed of 13 different subunits. Subunits NuoA, H, J, K, L, M, N constitute the membrane sector of the complex.</text>
</comment>
<comment type="subcellular location">
    <subcellularLocation>
        <location evidence="1">Cell inner membrane</location>
        <topology evidence="1">Multi-pass membrane protein</topology>
    </subcellularLocation>
</comment>
<comment type="similarity">
    <text evidence="1">Belongs to the complex I subunit 3 family.</text>
</comment>
<keyword id="KW-0997">Cell inner membrane</keyword>
<keyword id="KW-1003">Cell membrane</keyword>
<keyword id="KW-0472">Membrane</keyword>
<keyword id="KW-0520">NAD</keyword>
<keyword id="KW-0874">Quinone</keyword>
<keyword id="KW-1278">Translocase</keyword>
<keyword id="KW-0812">Transmembrane</keyword>
<keyword id="KW-1133">Transmembrane helix</keyword>
<keyword id="KW-0813">Transport</keyword>
<keyword id="KW-0830">Ubiquinone</keyword>
<proteinExistence type="inferred from homology"/>
<feature type="chain" id="PRO_0000362679" description="NADH-quinone oxidoreductase subunit A">
    <location>
        <begin position="1"/>
        <end position="147"/>
    </location>
</feature>
<feature type="transmembrane region" description="Helical" evidence="1">
    <location>
        <begin position="16"/>
        <end position="36"/>
    </location>
</feature>
<feature type="transmembrane region" description="Helical" evidence="1">
    <location>
        <begin position="68"/>
        <end position="88"/>
    </location>
</feature>
<feature type="transmembrane region" description="Helical" evidence="1">
    <location>
        <begin position="98"/>
        <end position="118"/>
    </location>
</feature>
<protein>
    <recommendedName>
        <fullName evidence="1">NADH-quinone oxidoreductase subunit A</fullName>
        <ecNumber evidence="1">7.1.1.-</ecNumber>
    </recommendedName>
    <alternativeName>
        <fullName evidence="1">NADH dehydrogenase I subunit A</fullName>
    </alternativeName>
    <alternativeName>
        <fullName evidence="1">NDH-1 subunit A</fullName>
    </alternativeName>
    <alternativeName>
        <fullName evidence="1">NUO1</fullName>
    </alternativeName>
</protein>
<reference key="1">
    <citation type="journal article" date="2008" name="J. Bacteriol.">
        <title>The complete genome sequence of Escherichia coli DH10B: insights into the biology of a laboratory workhorse.</title>
        <authorList>
            <person name="Durfee T."/>
            <person name="Nelson R."/>
            <person name="Baldwin S."/>
            <person name="Plunkett G. III"/>
            <person name="Burland V."/>
            <person name="Mau B."/>
            <person name="Petrosino J.F."/>
            <person name="Qin X."/>
            <person name="Muzny D.M."/>
            <person name="Ayele M."/>
            <person name="Gibbs R.A."/>
            <person name="Csorgo B."/>
            <person name="Posfai G."/>
            <person name="Weinstock G.M."/>
            <person name="Blattner F.R."/>
        </authorList>
    </citation>
    <scope>NUCLEOTIDE SEQUENCE [LARGE SCALE GENOMIC DNA]</scope>
    <source>
        <strain>K12 / DH10B</strain>
    </source>
</reference>
<organism>
    <name type="scientific">Escherichia coli (strain K12 / DH10B)</name>
    <dbReference type="NCBI Taxonomy" id="316385"/>
    <lineage>
        <taxon>Bacteria</taxon>
        <taxon>Pseudomonadati</taxon>
        <taxon>Pseudomonadota</taxon>
        <taxon>Gammaproteobacteria</taxon>
        <taxon>Enterobacterales</taxon>
        <taxon>Enterobacteriaceae</taxon>
        <taxon>Escherichia</taxon>
    </lineage>
</organism>
<gene>
    <name evidence="1" type="primary">nuoA</name>
    <name type="ordered locus">ECDH10B_2450</name>
</gene>